<organism>
    <name type="scientific">Mus musculus</name>
    <name type="common">Mouse</name>
    <dbReference type="NCBI Taxonomy" id="10090"/>
    <lineage>
        <taxon>Eukaryota</taxon>
        <taxon>Metazoa</taxon>
        <taxon>Chordata</taxon>
        <taxon>Craniata</taxon>
        <taxon>Vertebrata</taxon>
        <taxon>Euteleostomi</taxon>
        <taxon>Mammalia</taxon>
        <taxon>Eutheria</taxon>
        <taxon>Euarchontoglires</taxon>
        <taxon>Glires</taxon>
        <taxon>Rodentia</taxon>
        <taxon>Myomorpha</taxon>
        <taxon>Muroidea</taxon>
        <taxon>Muridae</taxon>
        <taxon>Murinae</taxon>
        <taxon>Mus</taxon>
        <taxon>Mus</taxon>
    </lineage>
</organism>
<comment type="function">
    <text evidence="1 2 6 9">Uniporter involved in the facilitative transport of nucleosides and nucleobases, and contributes to maintaining their cellular homeostasis (PubMed:11085929, PubMed:35790189). Functions as a Na(+)-independent transporter (By similarity). Involved in the transport of nucleosides such as adenosine, guanosine, inosine, uridine, thymidine and cytidine (PubMed:11085929, PubMed:23639800, PubMed:35790189). Also transports purine (hypoxanthine, adenine, guanine) and pyrimidine nucleobases (thymine, uracil) (By similarity). Mediates basolateral nucleoside uptake into Sertoli cells, thereby regulating the transport of nucleosides in testis across the blood-testis-barrier (By similarity). Regulates inosine levels in brown adipocytes tissues (BAT) and extracellular inosine levels, which controls BAT-dependent energy expenditure (PubMed:35790189).</text>
</comment>
<comment type="catalytic activity">
    <reaction evidence="2">
        <text>adenosine(in) = adenosine(out)</text>
        <dbReference type="Rhea" id="RHEA:75343"/>
        <dbReference type="ChEBI" id="CHEBI:16335"/>
    </reaction>
</comment>
<comment type="catalytic activity">
    <reaction evidence="2">
        <text>guanosine(in) = guanosine(out)</text>
        <dbReference type="Rhea" id="RHEA:75371"/>
        <dbReference type="ChEBI" id="CHEBI:16750"/>
    </reaction>
</comment>
<comment type="catalytic activity">
    <reaction evidence="9">
        <text>inosine(in) = inosine(out)</text>
        <dbReference type="Rhea" id="RHEA:75375"/>
        <dbReference type="ChEBI" id="CHEBI:17596"/>
    </reaction>
</comment>
<comment type="catalytic activity">
    <reaction evidence="8">
        <text>uridine(out) = uridine(in)</text>
        <dbReference type="Rhea" id="RHEA:71519"/>
        <dbReference type="ChEBI" id="CHEBI:16704"/>
    </reaction>
</comment>
<comment type="catalytic activity">
    <reaction evidence="2">
        <text>thymidine(in) = thymidine(out)</text>
        <dbReference type="Rhea" id="RHEA:75363"/>
        <dbReference type="ChEBI" id="CHEBI:17748"/>
    </reaction>
</comment>
<comment type="catalytic activity">
    <reaction evidence="2">
        <text>cytidine(in) = cytidine(out)</text>
        <dbReference type="Rhea" id="RHEA:75367"/>
        <dbReference type="ChEBI" id="CHEBI:17562"/>
    </reaction>
</comment>
<comment type="catalytic activity">
    <reaction evidence="2">
        <text>adenine(out) = adenine(in)</text>
        <dbReference type="Rhea" id="RHEA:71523"/>
        <dbReference type="ChEBI" id="CHEBI:16708"/>
    </reaction>
</comment>
<comment type="catalytic activity">
    <reaction evidence="2">
        <text>guanine(out) = guanine(in)</text>
        <dbReference type="Rhea" id="RHEA:71531"/>
        <dbReference type="ChEBI" id="CHEBI:16235"/>
    </reaction>
</comment>
<comment type="catalytic activity">
    <reaction evidence="2">
        <text>thymine(out) = thymine(in)</text>
        <dbReference type="Rhea" id="RHEA:71527"/>
        <dbReference type="ChEBI" id="CHEBI:17821"/>
    </reaction>
</comment>
<comment type="catalytic activity">
    <reaction evidence="2">
        <text>uracil(in) = uracil(out)</text>
        <dbReference type="Rhea" id="RHEA:69404"/>
        <dbReference type="ChEBI" id="CHEBI:17568"/>
    </reaction>
</comment>
<comment type="catalytic activity">
    <reaction evidence="2">
        <text>hypoxanthine(out) = hypoxanthine(in)</text>
        <dbReference type="Rhea" id="RHEA:71515"/>
        <dbReference type="ChEBI" id="CHEBI:17368"/>
    </reaction>
</comment>
<comment type="activity regulation">
    <text evidence="6 8">Transporter activity is sensitive to low concentrations of the inhibitor nitrobenzylmercaptopurine riboside (NBMPR).</text>
</comment>
<comment type="subunit">
    <text evidence="2">Identified in a complex with STOM.</text>
</comment>
<comment type="subcellular location">
    <subcellularLocation>
        <location evidence="2">Basolateral cell membrane</location>
        <topology evidence="14">Multi-pass membrane protein</topology>
    </subcellularLocation>
    <subcellularLocation>
        <location evidence="2">Apical cell membrane</location>
        <topology evidence="14">Multi-pass membrane protein</topology>
    </subcellularLocation>
    <subcellularLocation>
        <location evidence="2">Cell membrane</location>
        <topology evidence="14">Multi-pass membrane protein</topology>
    </subcellularLocation>
</comment>
<comment type="alternative products">
    <event type="alternative splicing"/>
    <isoform>
        <id>Q9JIM1-1</id>
        <name>1</name>
        <name>Ent1b</name>
        <sequence type="displayed"/>
    </isoform>
    <isoform>
        <id>Q9JIM1-2</id>
        <name>2</name>
        <sequence type="described" ref="VSP_010471"/>
    </isoform>
</comment>
<comment type="tissue specificity">
    <text evidence="5 8 9">Highly expressed in heart, spleen, lung, liver and testis. Lower level of expression in brain and kidney (PubMed:11027664). Expressed in adipose tissues, brown adipocytes expressing significantly higher amounts than white adipocytes (PubMed:35790189). Expressed in seminiferous tubules (PubMed:23639800).</text>
</comment>
<comment type="domain">
    <text evidence="2">Cys-418 near TM10 is a major determinant of nucleobase transport activity.</text>
</comment>
<comment type="PTM">
    <text evidence="7">Glycosylated.</text>
</comment>
<comment type="disruption phenotype">
    <text evidence="9">Knockout mice show an increase in extracellular inosine levels and consequently enhancement differentiation and thermogenic capacity of brown adipocytes (PubMed:35790189). Knockout mice show an increased brown adipocyte tissue function and browning of white adipocyte tissue, and are resistant to diet-induced obesity (PubMed:35790189).</text>
</comment>
<comment type="similarity">
    <text evidence="14">Belongs to the SLC29A/ENT transporter (TC 2.A.57) family.</text>
</comment>
<protein>
    <recommendedName>
        <fullName evidence="10">Equilibrative nucleoside transporter 1</fullName>
        <shortName evidence="10">mENT1</shortName>
    </recommendedName>
    <alternativeName>
        <fullName evidence="10">Equilibrative nitrobenzylmercaptopurine riboside-sensitive nucleoside transporter</fullName>
        <shortName evidence="10">Equilibrative NBMPR-sensitive nucleoside transporter</shortName>
    </alternativeName>
    <alternativeName>
        <fullName>Nucleoside transporter, es-type</fullName>
    </alternativeName>
    <alternativeName>
        <fullName evidence="13">Solute carrier family 29 member 1</fullName>
    </alternativeName>
</protein>
<sequence length="460" mass="50192">MTTSHQPQDRYKAVWLIFFVLGLGTLLPWNFFMTATKYFTNRLDVSQNVSSDTDQSCESTKALADPTVALPARSSLSAIFNNVMTLCAMLPLLVFTCLNSFLHQRISQSVRILGSLLAILLVFLVTAALVKVEMDALIFFVITMIKIVLINSFGAILQASLFGLAGVLPANYTAPIMSGQGLAGFFTSVAMICAIASGSELSESAFGYFITACAVVILAILCYLALPRTEFYRHYLQLNLAGPAEQETKLDLISKGEEPKGRREESGVPGPNSPPTNRNQSIKAILKSICVPALSVCFIFTVTIGLFPAVTAEVESSIAGTSPWKSYFIPVACFLNFNVFDWLGRSLTAVCMWPGQDSRWLPVLVASRIVFIPLLMLCNVKARHCGAQRHHFVFKHDAWFIAFMAAFAFSNGYLASLCMCFGPKKVKPAEAETAGNIMSFFLCLGLALGAVLSFLLRALV</sequence>
<evidence type="ECO:0000250" key="1">
    <source>
        <dbReference type="UniProtKB" id="O54698"/>
    </source>
</evidence>
<evidence type="ECO:0000250" key="2">
    <source>
        <dbReference type="UniProtKB" id="Q99808"/>
    </source>
</evidence>
<evidence type="ECO:0000255" key="3"/>
<evidence type="ECO:0000256" key="4">
    <source>
        <dbReference type="SAM" id="MobiDB-lite"/>
    </source>
</evidence>
<evidence type="ECO:0000269" key="5">
    <source>
    </source>
</evidence>
<evidence type="ECO:0000269" key="6">
    <source>
    </source>
</evidence>
<evidence type="ECO:0000269" key="7">
    <source>
    </source>
</evidence>
<evidence type="ECO:0000269" key="8">
    <source>
    </source>
</evidence>
<evidence type="ECO:0000269" key="9">
    <source>
    </source>
</evidence>
<evidence type="ECO:0000303" key="10">
    <source>
    </source>
</evidence>
<evidence type="ECO:0000303" key="11">
    <source>
    </source>
</evidence>
<evidence type="ECO:0000303" key="12">
    <source>
    </source>
</evidence>
<evidence type="ECO:0000303" key="13">
    <source>
    </source>
</evidence>
<evidence type="ECO:0000305" key="14"/>
<evidence type="ECO:0000312" key="15">
    <source>
        <dbReference type="MGI" id="MGI:1927073"/>
    </source>
</evidence>
<dbReference type="EMBL" id="AF218255">
    <property type="protein sequence ID" value="AAF64035.2"/>
    <property type="molecule type" value="Genomic_DNA"/>
</dbReference>
<dbReference type="EMBL" id="AF218255">
    <property type="protein sequence ID" value="AAF64036.2"/>
    <property type="molecule type" value="Genomic_DNA"/>
</dbReference>
<dbReference type="EMBL" id="AF305501">
    <property type="protein sequence ID" value="AAG22828.1"/>
    <property type="molecule type" value="mRNA"/>
</dbReference>
<dbReference type="EMBL" id="AF131212">
    <property type="protein sequence ID" value="AAF78452.1"/>
    <property type="molecule type" value="mRNA"/>
</dbReference>
<dbReference type="EMBL" id="AK004756">
    <property type="protein sequence ID" value="BAB23537.1"/>
    <property type="molecule type" value="mRNA"/>
</dbReference>
<dbReference type="EMBL" id="AK050089">
    <property type="protein sequence ID" value="BAC34063.1"/>
    <property type="molecule type" value="mRNA"/>
</dbReference>
<dbReference type="EMBL" id="BC004828">
    <property type="protein sequence ID" value="AAH04828.1"/>
    <property type="molecule type" value="mRNA"/>
</dbReference>
<dbReference type="EMBL" id="BC006812">
    <property type="protein sequence ID" value="AAH06812.1"/>
    <property type="molecule type" value="mRNA"/>
</dbReference>
<dbReference type="CCDS" id="CCDS28813.1">
    <molecule id="Q9JIM1-2"/>
</dbReference>
<dbReference type="CCDS" id="CCDS57096.1">
    <molecule id="Q9JIM1-1"/>
</dbReference>
<dbReference type="RefSeq" id="NP_001186042.1">
    <molecule id="Q9JIM1-1"/>
    <property type="nucleotide sequence ID" value="NM_001199113.2"/>
</dbReference>
<dbReference type="RefSeq" id="NP_001186043.1">
    <molecule id="Q9JIM1-1"/>
    <property type="nucleotide sequence ID" value="NM_001199114.2"/>
</dbReference>
<dbReference type="RefSeq" id="NP_001186044.1">
    <molecule id="Q9JIM1-2"/>
    <property type="nucleotide sequence ID" value="NM_001199115.2"/>
</dbReference>
<dbReference type="RefSeq" id="NP_001186045.1">
    <molecule id="Q9JIM1-2"/>
    <property type="nucleotide sequence ID" value="NM_001199116.2"/>
</dbReference>
<dbReference type="RefSeq" id="NP_001344700.1">
    <molecule id="Q9JIM1-2"/>
    <property type="nucleotide sequence ID" value="NM_001357771.2"/>
</dbReference>
<dbReference type="RefSeq" id="NP_001363916.1">
    <molecule id="Q9JIM1-1"/>
    <property type="nucleotide sequence ID" value="NM_001376987.1"/>
</dbReference>
<dbReference type="RefSeq" id="NP_001363917.1">
    <molecule id="Q9JIM1-1"/>
    <property type="nucleotide sequence ID" value="NM_001376988.1"/>
</dbReference>
<dbReference type="RefSeq" id="NP_001363918.1">
    <molecule id="Q9JIM1-1"/>
    <property type="nucleotide sequence ID" value="NM_001376989.1"/>
</dbReference>
<dbReference type="RefSeq" id="NP_001363919.1">
    <molecule id="Q9JIM1-1"/>
    <property type="nucleotide sequence ID" value="NM_001376990.1"/>
</dbReference>
<dbReference type="RefSeq" id="NP_001363920.1">
    <molecule id="Q9JIM1-2"/>
    <property type="nucleotide sequence ID" value="NM_001376991.1"/>
</dbReference>
<dbReference type="RefSeq" id="NP_001363921.1">
    <molecule id="Q9JIM1-2"/>
    <property type="nucleotide sequence ID" value="NM_001376992.1"/>
</dbReference>
<dbReference type="RefSeq" id="NP_001363922.1">
    <molecule id="Q9JIM1-2"/>
    <property type="nucleotide sequence ID" value="NM_001376993.1"/>
</dbReference>
<dbReference type="RefSeq" id="NP_001363923.1">
    <molecule id="Q9JIM1-2"/>
    <property type="nucleotide sequence ID" value="NM_001376994.1"/>
</dbReference>
<dbReference type="RefSeq" id="NP_001363924.1">
    <molecule id="Q9JIM1-2"/>
    <property type="nucleotide sequence ID" value="NM_001376995.1"/>
</dbReference>
<dbReference type="RefSeq" id="NP_001363925.1">
    <molecule id="Q9JIM1-2"/>
    <property type="nucleotide sequence ID" value="NM_001376996.1"/>
</dbReference>
<dbReference type="RefSeq" id="NP_075018.1">
    <molecule id="Q9JIM1-2"/>
    <property type="nucleotide sequence ID" value="NM_022880.4"/>
</dbReference>
<dbReference type="RefSeq" id="XP_006524831.1">
    <property type="nucleotide sequence ID" value="XM_006524768.1"/>
</dbReference>
<dbReference type="RefSeq" id="XP_006524832.1">
    <property type="nucleotide sequence ID" value="XM_006524769.2"/>
</dbReference>
<dbReference type="RefSeq" id="XP_006524833.1">
    <property type="nucleotide sequence ID" value="XM_006524770.3"/>
</dbReference>
<dbReference type="RefSeq" id="XP_006524834.1">
    <property type="nucleotide sequence ID" value="XM_006524771.1"/>
</dbReference>
<dbReference type="RefSeq" id="XP_030105826.1">
    <molecule id="Q9JIM1-2"/>
    <property type="nucleotide sequence ID" value="XM_030249966.2"/>
</dbReference>
<dbReference type="RefSeq" id="XP_036016627.1">
    <molecule id="Q9JIM1-1"/>
    <property type="nucleotide sequence ID" value="XM_036160734.1"/>
</dbReference>
<dbReference type="SMR" id="Q9JIM1"/>
<dbReference type="BioGRID" id="211010">
    <property type="interactions" value="9"/>
</dbReference>
<dbReference type="FunCoup" id="Q9JIM1">
    <property type="interactions" value="98"/>
</dbReference>
<dbReference type="STRING" id="10090.ENSMUSP00000131976"/>
<dbReference type="BindingDB" id="Q9JIM1"/>
<dbReference type="ChEMBL" id="CHEMBL1287611"/>
<dbReference type="GlyCosmos" id="Q9JIM1">
    <property type="glycosylation" value="1 site, No reported glycans"/>
</dbReference>
<dbReference type="GlyGen" id="Q9JIM1">
    <property type="glycosylation" value="1 site, 1 N-linked glycan (1 site)"/>
</dbReference>
<dbReference type="iPTMnet" id="Q9JIM1"/>
<dbReference type="PhosphoSitePlus" id="Q9JIM1"/>
<dbReference type="SwissPalm" id="Q9JIM1"/>
<dbReference type="jPOST" id="Q9JIM1"/>
<dbReference type="PaxDb" id="10090-ENSMUSP00000131976"/>
<dbReference type="ProteomicsDB" id="256876">
    <molecule id="Q9JIM1-1"/>
</dbReference>
<dbReference type="ProteomicsDB" id="256877">
    <molecule id="Q9JIM1-2"/>
</dbReference>
<dbReference type="Pumba" id="Q9JIM1"/>
<dbReference type="Antibodypedia" id="2790">
    <property type="antibodies" value="577 antibodies from 40 providers"/>
</dbReference>
<dbReference type="DNASU" id="63959"/>
<dbReference type="Ensembl" id="ENSMUST00000051574.13">
    <molecule id="Q9JIM1-1"/>
    <property type="protein sequence ID" value="ENSMUSP00000063096.7"/>
    <property type="gene ID" value="ENSMUSG00000023942.16"/>
</dbReference>
<dbReference type="Ensembl" id="ENSMUST00000064889.13">
    <molecule id="Q9JIM1-2"/>
    <property type="protein sequence ID" value="ENSMUSP00000063757.7"/>
    <property type="gene ID" value="ENSMUSG00000023942.16"/>
</dbReference>
<dbReference type="Ensembl" id="ENSMUST00000097317.10">
    <molecule id="Q9JIM1-1"/>
    <property type="protein sequence ID" value="ENSMUSP00000094923.4"/>
    <property type="gene ID" value="ENSMUSG00000023942.16"/>
</dbReference>
<dbReference type="Ensembl" id="ENSMUST00000163492.8">
    <molecule id="Q9JIM1-2"/>
    <property type="protein sequence ID" value="ENSMUSP00000129242.2"/>
    <property type="gene ID" value="ENSMUSG00000023942.16"/>
</dbReference>
<dbReference type="Ensembl" id="ENSMUST00000166119.8">
    <molecule id="Q9JIM1-1"/>
    <property type="protein sequence ID" value="ENSMUSP00000128763.2"/>
    <property type="gene ID" value="ENSMUSG00000023942.16"/>
</dbReference>
<dbReference type="Ensembl" id="ENSMUST00000167692.8">
    <molecule id="Q9JIM1-1"/>
    <property type="protein sequence ID" value="ENSMUSP00000131976.2"/>
    <property type="gene ID" value="ENSMUSG00000023942.16"/>
</dbReference>
<dbReference type="Ensembl" id="ENSMUST00000171847.8">
    <molecule id="Q9JIM1-2"/>
    <property type="protein sequence ID" value="ENSMUSP00000126703.2"/>
    <property type="gene ID" value="ENSMUSG00000023942.16"/>
</dbReference>
<dbReference type="GeneID" id="63959"/>
<dbReference type="KEGG" id="mmu:63959"/>
<dbReference type="UCSC" id="uc008crb.2">
    <molecule id="Q9JIM1-1"/>
    <property type="organism name" value="mouse"/>
</dbReference>
<dbReference type="AGR" id="MGI:1927073"/>
<dbReference type="CTD" id="2030"/>
<dbReference type="MGI" id="MGI:1927073">
    <property type="gene designation" value="Slc29a1"/>
</dbReference>
<dbReference type="VEuPathDB" id="HostDB:ENSMUSG00000023942"/>
<dbReference type="eggNOG" id="KOG1479">
    <property type="taxonomic scope" value="Eukaryota"/>
</dbReference>
<dbReference type="GeneTree" id="ENSGT00950000182898"/>
<dbReference type="HOGENOM" id="CLU_021611_6_0_1"/>
<dbReference type="InParanoid" id="Q9JIM1"/>
<dbReference type="OMA" id="KIMFINS"/>
<dbReference type="OrthoDB" id="46396at2759"/>
<dbReference type="PhylomeDB" id="Q9JIM1"/>
<dbReference type="TreeFam" id="TF313950"/>
<dbReference type="Reactome" id="R-MMU-83936">
    <property type="pathway name" value="Transport of nucleosides and free purine and pyrimidine bases across the plasma membrane"/>
</dbReference>
<dbReference type="Reactome" id="R-MMU-9748787">
    <property type="pathway name" value="Azathioprine ADME"/>
</dbReference>
<dbReference type="Reactome" id="R-MMU-9755088">
    <property type="pathway name" value="Ribavirin ADME"/>
</dbReference>
<dbReference type="BioGRID-ORCS" id="63959">
    <property type="hits" value="1 hit in 78 CRISPR screens"/>
</dbReference>
<dbReference type="ChiTaRS" id="Slc29a1">
    <property type="organism name" value="mouse"/>
</dbReference>
<dbReference type="PRO" id="PR:Q9JIM1"/>
<dbReference type="Proteomes" id="UP000000589">
    <property type="component" value="Chromosome 17"/>
</dbReference>
<dbReference type="RNAct" id="Q9JIM1">
    <property type="molecule type" value="protein"/>
</dbReference>
<dbReference type="Bgee" id="ENSMUSG00000023942">
    <property type="expression patterns" value="Expressed in gastrula and 214 other cell types or tissues"/>
</dbReference>
<dbReference type="ExpressionAtlas" id="Q9JIM1">
    <property type="expression patterns" value="baseline and differential"/>
</dbReference>
<dbReference type="GO" id="GO:0016324">
    <property type="term" value="C:apical plasma membrane"/>
    <property type="evidence" value="ECO:0000250"/>
    <property type="project" value="UniProtKB"/>
</dbReference>
<dbReference type="GO" id="GO:0016323">
    <property type="term" value="C:basolateral plasma membrane"/>
    <property type="evidence" value="ECO:0000250"/>
    <property type="project" value="UniProtKB"/>
</dbReference>
<dbReference type="GO" id="GO:0005886">
    <property type="term" value="C:plasma membrane"/>
    <property type="evidence" value="ECO:0000315"/>
    <property type="project" value="MGI"/>
</dbReference>
<dbReference type="GO" id="GO:0098794">
    <property type="term" value="C:postsynapse"/>
    <property type="evidence" value="ECO:0007669"/>
    <property type="project" value="Ensembl"/>
</dbReference>
<dbReference type="GO" id="GO:0098793">
    <property type="term" value="C:presynapse"/>
    <property type="evidence" value="ECO:0007669"/>
    <property type="project" value="Ensembl"/>
</dbReference>
<dbReference type="GO" id="GO:0015207">
    <property type="term" value="F:adenine transmembrane transporter activity"/>
    <property type="evidence" value="ECO:0007669"/>
    <property type="project" value="Ensembl"/>
</dbReference>
<dbReference type="GO" id="GO:0015212">
    <property type="term" value="F:cytidine transmembrane transporter activity"/>
    <property type="evidence" value="ECO:0000250"/>
    <property type="project" value="UniProtKB"/>
</dbReference>
<dbReference type="GO" id="GO:0015208">
    <property type="term" value="F:guanine transmembrane transporter activity"/>
    <property type="evidence" value="ECO:0007669"/>
    <property type="project" value="Ensembl"/>
</dbReference>
<dbReference type="GO" id="GO:0005326">
    <property type="term" value="F:neurotransmitter transmembrane transporter activity"/>
    <property type="evidence" value="ECO:0000315"/>
    <property type="project" value="ARUK-UCL"/>
</dbReference>
<dbReference type="GO" id="GO:0005337">
    <property type="term" value="F:nucleoside transmembrane transporter activity"/>
    <property type="evidence" value="ECO:0000314"/>
    <property type="project" value="MGI"/>
</dbReference>
<dbReference type="GO" id="GO:0015211">
    <property type="term" value="F:purine nucleoside transmembrane transporter activity"/>
    <property type="evidence" value="ECO:0000315"/>
    <property type="project" value="ARUK-UCL"/>
</dbReference>
<dbReference type="GO" id="GO:0015389">
    <property type="term" value="F:pyrimidine- and adenosine-specific:sodium symporter activity"/>
    <property type="evidence" value="ECO:0000250"/>
    <property type="project" value="UniProtKB"/>
</dbReference>
<dbReference type="GO" id="GO:0015210">
    <property type="term" value="F:uracil transmembrane transporter activity"/>
    <property type="evidence" value="ECO:0007669"/>
    <property type="project" value="Ensembl"/>
</dbReference>
<dbReference type="GO" id="GO:0015213">
    <property type="term" value="F:uridine transmembrane transporter activity"/>
    <property type="evidence" value="ECO:0000314"/>
    <property type="project" value="UniProtKB"/>
</dbReference>
<dbReference type="GO" id="GO:0015853">
    <property type="term" value="P:adenine transport"/>
    <property type="evidence" value="ECO:0000250"/>
    <property type="project" value="UniProtKB"/>
</dbReference>
<dbReference type="GO" id="GO:0032238">
    <property type="term" value="P:adenosine transport"/>
    <property type="evidence" value="ECO:0000315"/>
    <property type="project" value="ARUK-UCL"/>
</dbReference>
<dbReference type="GO" id="GO:0071333">
    <property type="term" value="P:cellular response to glucose stimulus"/>
    <property type="evidence" value="ECO:0007669"/>
    <property type="project" value="Ensembl"/>
</dbReference>
<dbReference type="GO" id="GO:0071456">
    <property type="term" value="P:cellular response to hypoxia"/>
    <property type="evidence" value="ECO:0007669"/>
    <property type="project" value="Ensembl"/>
</dbReference>
<dbReference type="GO" id="GO:0015861">
    <property type="term" value="P:cytidine transport"/>
    <property type="evidence" value="ECO:0000250"/>
    <property type="project" value="UniProtKB"/>
</dbReference>
<dbReference type="GO" id="GO:0060079">
    <property type="term" value="P:excitatory postsynaptic potential"/>
    <property type="evidence" value="ECO:0007669"/>
    <property type="project" value="Ensembl"/>
</dbReference>
<dbReference type="GO" id="GO:0035344">
    <property type="term" value="P:hypoxanthine transport"/>
    <property type="evidence" value="ECO:0007669"/>
    <property type="project" value="Ensembl"/>
</dbReference>
<dbReference type="GO" id="GO:0035340">
    <property type="term" value="P:inosine transport"/>
    <property type="evidence" value="ECO:0000315"/>
    <property type="project" value="UniProtKB"/>
</dbReference>
<dbReference type="GO" id="GO:0007595">
    <property type="term" value="P:lactation"/>
    <property type="evidence" value="ECO:0007669"/>
    <property type="project" value="Ensembl"/>
</dbReference>
<dbReference type="GO" id="GO:0001504">
    <property type="term" value="P:neurotransmitter uptake"/>
    <property type="evidence" value="ECO:0000315"/>
    <property type="project" value="ARUK-UCL"/>
</dbReference>
<dbReference type="GO" id="GO:0015851">
    <property type="term" value="P:nucleobase transport"/>
    <property type="evidence" value="ECO:0000250"/>
    <property type="project" value="UniProtKB"/>
</dbReference>
<dbReference type="GO" id="GO:1901642">
    <property type="term" value="P:nucleoside transmembrane transport"/>
    <property type="evidence" value="ECO:0000314"/>
    <property type="project" value="UniProtKB"/>
</dbReference>
<dbReference type="GO" id="GO:0015858">
    <property type="term" value="P:nucleoside transport"/>
    <property type="evidence" value="ECO:0000314"/>
    <property type="project" value="MGI"/>
</dbReference>
<dbReference type="GO" id="GO:1904823">
    <property type="term" value="P:purine nucleobase transmembrane transport"/>
    <property type="evidence" value="ECO:0000250"/>
    <property type="project" value="UniProtKB"/>
</dbReference>
<dbReference type="GO" id="GO:0015860">
    <property type="term" value="P:purine nucleoside transmembrane transport"/>
    <property type="evidence" value="ECO:0000315"/>
    <property type="project" value="ARUK-UCL"/>
</dbReference>
<dbReference type="GO" id="GO:1904082">
    <property type="term" value="P:pyrimidine nucleobase transmembrane transport"/>
    <property type="evidence" value="ECO:0000250"/>
    <property type="project" value="UniProtKB"/>
</dbReference>
<dbReference type="GO" id="GO:0035364">
    <property type="term" value="P:thymine transport"/>
    <property type="evidence" value="ECO:0007669"/>
    <property type="project" value="Ensembl"/>
</dbReference>
<dbReference type="GO" id="GO:0015862">
    <property type="term" value="P:uridine transmembrane transport"/>
    <property type="evidence" value="ECO:0000314"/>
    <property type="project" value="UniProtKB"/>
</dbReference>
<dbReference type="InterPro" id="IPR034764">
    <property type="entry name" value="ENT1/ENT2"/>
</dbReference>
<dbReference type="InterPro" id="IPR002259">
    <property type="entry name" value="Eqnu_transpt"/>
</dbReference>
<dbReference type="InterPro" id="IPR036259">
    <property type="entry name" value="MFS_trans_sf"/>
</dbReference>
<dbReference type="NCBIfam" id="TIGR00939">
    <property type="entry name" value="2a57"/>
    <property type="match status" value="1"/>
</dbReference>
<dbReference type="PANTHER" id="PTHR10332">
    <property type="entry name" value="EQUILIBRATIVE NUCLEOSIDE TRANSPORTER"/>
    <property type="match status" value="1"/>
</dbReference>
<dbReference type="PANTHER" id="PTHR10332:SF9">
    <property type="entry name" value="EQUILIBRATIVE NUCLEOSIDE TRANSPORTER 1"/>
    <property type="match status" value="1"/>
</dbReference>
<dbReference type="Pfam" id="PF01733">
    <property type="entry name" value="Nucleoside_tran"/>
    <property type="match status" value="1"/>
</dbReference>
<dbReference type="PIRSF" id="PIRSF016379">
    <property type="entry name" value="ENT"/>
    <property type="match status" value="1"/>
</dbReference>
<dbReference type="PRINTS" id="PR01130">
    <property type="entry name" value="DERENTRNSPRT"/>
</dbReference>
<dbReference type="SUPFAM" id="SSF103473">
    <property type="entry name" value="MFS general substrate transporter"/>
    <property type="match status" value="1"/>
</dbReference>
<accession>Q9JIM1</accession>
<accession>Q99K84</accession>
<accession>Q9DBT8</accession>
<accession>Q9JHF0</accession>
<feature type="chain" id="PRO_0000209338" description="Equilibrative nucleoside transporter 1">
    <location>
        <begin position="1"/>
        <end position="460"/>
    </location>
</feature>
<feature type="topological domain" description="Cytoplasmic" evidence="3">
    <location>
        <begin position="1"/>
        <end position="12"/>
    </location>
</feature>
<feature type="transmembrane region" description="Helical" evidence="3">
    <location>
        <begin position="13"/>
        <end position="29"/>
    </location>
</feature>
<feature type="topological domain" description="Extracellular" evidence="3">
    <location>
        <begin position="30"/>
        <end position="82"/>
    </location>
</feature>
<feature type="transmembrane region" description="Helical" evidence="3">
    <location>
        <begin position="83"/>
        <end position="107"/>
    </location>
</feature>
<feature type="topological domain" description="Cytoplasmic" evidence="3">
    <location>
        <begin position="108"/>
        <end position="111"/>
    </location>
</feature>
<feature type="transmembrane region" description="Helical" evidence="3">
    <location>
        <begin position="112"/>
        <end position="130"/>
    </location>
</feature>
<feature type="topological domain" description="Extracellular" evidence="3">
    <location>
        <begin position="131"/>
        <end position="138"/>
    </location>
</feature>
<feature type="transmembrane region" description="Helical" evidence="3">
    <location>
        <begin position="139"/>
        <end position="157"/>
    </location>
</feature>
<feature type="topological domain" description="Cytoplasmic" evidence="3">
    <location>
        <begin position="158"/>
        <end position="174"/>
    </location>
</feature>
<feature type="transmembrane region" description="Helical" evidence="3">
    <location>
        <begin position="175"/>
        <end position="199"/>
    </location>
</feature>
<feature type="topological domain" description="Extracellular" evidence="3">
    <location>
        <begin position="200"/>
        <end position="206"/>
    </location>
</feature>
<feature type="transmembrane region" description="Helical" evidence="3">
    <location>
        <begin position="207"/>
        <end position="227"/>
    </location>
</feature>
<feature type="topological domain" description="Cytoplasmic" evidence="3">
    <location>
        <begin position="228"/>
        <end position="291"/>
    </location>
</feature>
<feature type="transmembrane region" description="Helical" evidence="3">
    <location>
        <begin position="292"/>
        <end position="311"/>
    </location>
</feature>
<feature type="topological domain" description="Extracellular" evidence="3">
    <location>
        <begin position="312"/>
        <end position="323"/>
    </location>
</feature>
<feature type="transmembrane region" description="Helical" evidence="3">
    <location>
        <begin position="324"/>
        <end position="342"/>
    </location>
</feature>
<feature type="topological domain" description="Cytoplasmic" evidence="3">
    <location>
        <begin position="343"/>
        <end position="359"/>
    </location>
</feature>
<feature type="transmembrane region" description="Helical" evidence="3">
    <location>
        <begin position="360"/>
        <end position="378"/>
    </location>
</feature>
<feature type="topological domain" description="Extracellular" evidence="3">
    <location>
        <begin position="379"/>
        <end position="397"/>
    </location>
</feature>
<feature type="transmembrane region" description="Helical" evidence="3">
    <location>
        <begin position="398"/>
        <end position="417"/>
    </location>
</feature>
<feature type="topological domain" description="Cytoplasmic" evidence="3">
    <location>
        <begin position="418"/>
        <end position="435"/>
    </location>
</feature>
<feature type="transmembrane region" description="Helical" evidence="3">
    <location>
        <begin position="436"/>
        <end position="456"/>
    </location>
</feature>
<feature type="topological domain" description="Extracellular" evidence="3">
    <location>
        <begin position="457"/>
        <end position="460"/>
    </location>
</feature>
<feature type="region of interest" description="Disordered" evidence="4">
    <location>
        <begin position="255"/>
        <end position="277"/>
    </location>
</feature>
<feature type="compositionally biased region" description="Basic and acidic residues" evidence="4">
    <location>
        <begin position="255"/>
        <end position="266"/>
    </location>
</feature>
<feature type="site" description="Essential for nucleobase transport" evidence="2">
    <location>
        <position position="418"/>
    </location>
</feature>
<feature type="modified residue" description="Phosphoserine" evidence="2">
    <location>
        <position position="254"/>
    </location>
</feature>
<feature type="modified residue" description="Phosphoserine" evidence="2">
    <location>
        <position position="273"/>
    </location>
</feature>
<feature type="glycosylation site" description="N-linked (GlcNAc...) asparagine" evidence="7">
    <location>
        <position position="48"/>
    </location>
</feature>
<feature type="splice variant" id="VSP_010471" description="In isoform 2." evidence="10 11 12">
    <original>SKG</original>
    <variation>R</variation>
    <location>
        <begin position="254"/>
        <end position="256"/>
    </location>
</feature>
<feature type="sequence conflict" description="In Ref. 3; BAB23537." evidence="14" ref="3">
    <original>D</original>
    <variation>G</variation>
    <location>
        <position position="54"/>
    </location>
</feature>
<feature type="sequence conflict" description="In Ref. 4; AAH04828." evidence="14" ref="4">
    <original>I</original>
    <variation>T</variation>
    <location>
        <position position="138"/>
    </location>
</feature>
<feature type="sequence conflict" description="In Ref. 4; AAH04828." evidence="14" ref="4">
    <original>I</original>
    <variation>V</variation>
    <location>
        <position position="372"/>
    </location>
</feature>
<proteinExistence type="evidence at protein level"/>
<gene>
    <name evidence="15" type="primary">Slc29a1</name>
    <name type="synonym">Ent1</name>
</gene>
<keyword id="KW-0025">Alternative splicing</keyword>
<keyword id="KW-1003">Cell membrane</keyword>
<keyword id="KW-0325">Glycoprotein</keyword>
<keyword id="KW-0472">Membrane</keyword>
<keyword id="KW-0597">Phosphoprotein</keyword>
<keyword id="KW-1185">Reference proteome</keyword>
<keyword id="KW-0812">Transmembrane</keyword>
<keyword id="KW-1133">Transmembrane helix</keyword>
<keyword id="KW-0813">Transport</keyword>
<reference key="1">
    <citation type="journal article" date="2000" name="Biochem. Biophys. Res. Commun.">
        <title>Genomic organization and expression of the mouse equilibrative, nitrobenzylthioinosine-sensitive nucleoside transporter 1 (ENT1) gene.</title>
        <authorList>
            <person name="Choi D.-S."/>
            <person name="Handa M."/>
            <person name="Young H."/>
            <person name="Gordon A.S."/>
            <person name="Diamond I."/>
            <person name="Messing R.O."/>
        </authorList>
    </citation>
    <scope>NUCLEOTIDE SEQUENCE [GENOMIC DNA] (ISOFORMS 1 AND 2)</scope>
    <scope>TISSUE SPECIFICITY</scope>
    <source>
        <strain>129/SvJ</strain>
    </source>
</reference>
<reference key="2">
    <citation type="journal article" date="2000" name="Biochem. J.">
        <title>Molecular cloning and functional characterization of inhibitor-sensitive (mENT1) and inhibitor-resistant (mENT2) equilibrative nucleoside transporters from mouse brain.</title>
        <authorList>
            <person name="Kiss A."/>
            <person name="Farah K."/>
            <person name="Kim J."/>
            <person name="Garriock R.J."/>
            <person name="Drysdale T.A."/>
            <person name="Hammond J.R."/>
        </authorList>
    </citation>
    <scope>NUCLEOTIDE SEQUENCE [GENOMIC DNA / MRNA] (ISOFORMS 1 AND 2)</scope>
    <scope>FUNCTION</scope>
    <scope>TRANSPORTER ACTIVITY</scope>
    <scope>ACTIVITY REGULATION</scope>
    <source>
        <strain>CD-1</strain>
        <tissue>Brain</tissue>
    </source>
</reference>
<reference key="3">
    <citation type="journal article" date="2005" name="Science">
        <title>The transcriptional landscape of the mammalian genome.</title>
        <authorList>
            <person name="Carninci P."/>
            <person name="Kasukawa T."/>
            <person name="Katayama S."/>
            <person name="Gough J."/>
            <person name="Frith M.C."/>
            <person name="Maeda N."/>
            <person name="Oyama R."/>
            <person name="Ravasi T."/>
            <person name="Lenhard B."/>
            <person name="Wells C."/>
            <person name="Kodzius R."/>
            <person name="Shimokawa K."/>
            <person name="Bajic V.B."/>
            <person name="Brenner S.E."/>
            <person name="Batalov S."/>
            <person name="Forrest A.R."/>
            <person name="Zavolan M."/>
            <person name="Davis M.J."/>
            <person name="Wilming L.G."/>
            <person name="Aidinis V."/>
            <person name="Allen J.E."/>
            <person name="Ambesi-Impiombato A."/>
            <person name="Apweiler R."/>
            <person name="Aturaliya R.N."/>
            <person name="Bailey T.L."/>
            <person name="Bansal M."/>
            <person name="Baxter L."/>
            <person name="Beisel K.W."/>
            <person name="Bersano T."/>
            <person name="Bono H."/>
            <person name="Chalk A.M."/>
            <person name="Chiu K.P."/>
            <person name="Choudhary V."/>
            <person name="Christoffels A."/>
            <person name="Clutterbuck D.R."/>
            <person name="Crowe M.L."/>
            <person name="Dalla E."/>
            <person name="Dalrymple B.P."/>
            <person name="de Bono B."/>
            <person name="Della Gatta G."/>
            <person name="di Bernardo D."/>
            <person name="Down T."/>
            <person name="Engstrom P."/>
            <person name="Fagiolini M."/>
            <person name="Faulkner G."/>
            <person name="Fletcher C.F."/>
            <person name="Fukushima T."/>
            <person name="Furuno M."/>
            <person name="Futaki S."/>
            <person name="Gariboldi M."/>
            <person name="Georgii-Hemming P."/>
            <person name="Gingeras T.R."/>
            <person name="Gojobori T."/>
            <person name="Green R.E."/>
            <person name="Gustincich S."/>
            <person name="Harbers M."/>
            <person name="Hayashi Y."/>
            <person name="Hensch T.K."/>
            <person name="Hirokawa N."/>
            <person name="Hill D."/>
            <person name="Huminiecki L."/>
            <person name="Iacono M."/>
            <person name="Ikeo K."/>
            <person name="Iwama A."/>
            <person name="Ishikawa T."/>
            <person name="Jakt M."/>
            <person name="Kanapin A."/>
            <person name="Katoh M."/>
            <person name="Kawasawa Y."/>
            <person name="Kelso J."/>
            <person name="Kitamura H."/>
            <person name="Kitano H."/>
            <person name="Kollias G."/>
            <person name="Krishnan S.P."/>
            <person name="Kruger A."/>
            <person name="Kummerfeld S.K."/>
            <person name="Kurochkin I.V."/>
            <person name="Lareau L.F."/>
            <person name="Lazarevic D."/>
            <person name="Lipovich L."/>
            <person name="Liu J."/>
            <person name="Liuni S."/>
            <person name="McWilliam S."/>
            <person name="Madan Babu M."/>
            <person name="Madera M."/>
            <person name="Marchionni L."/>
            <person name="Matsuda H."/>
            <person name="Matsuzawa S."/>
            <person name="Miki H."/>
            <person name="Mignone F."/>
            <person name="Miyake S."/>
            <person name="Morris K."/>
            <person name="Mottagui-Tabar S."/>
            <person name="Mulder N."/>
            <person name="Nakano N."/>
            <person name="Nakauchi H."/>
            <person name="Ng P."/>
            <person name="Nilsson R."/>
            <person name="Nishiguchi S."/>
            <person name="Nishikawa S."/>
            <person name="Nori F."/>
            <person name="Ohara O."/>
            <person name="Okazaki Y."/>
            <person name="Orlando V."/>
            <person name="Pang K.C."/>
            <person name="Pavan W.J."/>
            <person name="Pavesi G."/>
            <person name="Pesole G."/>
            <person name="Petrovsky N."/>
            <person name="Piazza S."/>
            <person name="Reed J."/>
            <person name="Reid J.F."/>
            <person name="Ring B.Z."/>
            <person name="Ringwald M."/>
            <person name="Rost B."/>
            <person name="Ruan Y."/>
            <person name="Salzberg S.L."/>
            <person name="Sandelin A."/>
            <person name="Schneider C."/>
            <person name="Schoenbach C."/>
            <person name="Sekiguchi K."/>
            <person name="Semple C.A."/>
            <person name="Seno S."/>
            <person name="Sessa L."/>
            <person name="Sheng Y."/>
            <person name="Shibata Y."/>
            <person name="Shimada H."/>
            <person name="Shimada K."/>
            <person name="Silva D."/>
            <person name="Sinclair B."/>
            <person name="Sperling S."/>
            <person name="Stupka E."/>
            <person name="Sugiura K."/>
            <person name="Sultana R."/>
            <person name="Takenaka Y."/>
            <person name="Taki K."/>
            <person name="Tammoja K."/>
            <person name="Tan S.L."/>
            <person name="Tang S."/>
            <person name="Taylor M.S."/>
            <person name="Tegner J."/>
            <person name="Teichmann S.A."/>
            <person name="Ueda H.R."/>
            <person name="van Nimwegen E."/>
            <person name="Verardo R."/>
            <person name="Wei C.L."/>
            <person name="Yagi K."/>
            <person name="Yamanishi H."/>
            <person name="Zabarovsky E."/>
            <person name="Zhu S."/>
            <person name="Zimmer A."/>
            <person name="Hide W."/>
            <person name="Bult C."/>
            <person name="Grimmond S.M."/>
            <person name="Teasdale R.D."/>
            <person name="Liu E.T."/>
            <person name="Brusic V."/>
            <person name="Quackenbush J."/>
            <person name="Wahlestedt C."/>
            <person name="Mattick J.S."/>
            <person name="Hume D.A."/>
            <person name="Kai C."/>
            <person name="Sasaki D."/>
            <person name="Tomaru Y."/>
            <person name="Fukuda S."/>
            <person name="Kanamori-Katayama M."/>
            <person name="Suzuki M."/>
            <person name="Aoki J."/>
            <person name="Arakawa T."/>
            <person name="Iida J."/>
            <person name="Imamura K."/>
            <person name="Itoh M."/>
            <person name="Kato T."/>
            <person name="Kawaji H."/>
            <person name="Kawagashira N."/>
            <person name="Kawashima T."/>
            <person name="Kojima M."/>
            <person name="Kondo S."/>
            <person name="Konno H."/>
            <person name="Nakano K."/>
            <person name="Ninomiya N."/>
            <person name="Nishio T."/>
            <person name="Okada M."/>
            <person name="Plessy C."/>
            <person name="Shibata K."/>
            <person name="Shiraki T."/>
            <person name="Suzuki S."/>
            <person name="Tagami M."/>
            <person name="Waki K."/>
            <person name="Watahiki A."/>
            <person name="Okamura-Oho Y."/>
            <person name="Suzuki H."/>
            <person name="Kawai J."/>
            <person name="Hayashizaki Y."/>
        </authorList>
    </citation>
    <scope>NUCLEOTIDE SEQUENCE [LARGE SCALE MRNA] (ISOFORM 2)</scope>
    <source>
        <strain>C57BL/6J</strain>
        <tissue>Liver</tissue>
        <tissue>Lung</tissue>
    </source>
</reference>
<reference key="4">
    <citation type="journal article" date="2004" name="Genome Res.">
        <title>The status, quality, and expansion of the NIH full-length cDNA project: the Mammalian Gene Collection (MGC).</title>
        <authorList>
            <consortium name="The MGC Project Team"/>
        </authorList>
    </citation>
    <scope>NUCLEOTIDE SEQUENCE [LARGE SCALE MRNA] (ISOFORMS 1 AND 2)</scope>
    <source>
        <tissue>Mammary tumor</tissue>
    </source>
</reference>
<reference key="5">
    <citation type="journal article" date="2009" name="Nat. Biotechnol.">
        <title>Mass-spectrometric identification and relative quantification of N-linked cell surface glycoproteins.</title>
        <authorList>
            <person name="Wollscheid B."/>
            <person name="Bausch-Fluck D."/>
            <person name="Henderson C."/>
            <person name="O'Brien R."/>
            <person name="Bibel M."/>
            <person name="Schiess R."/>
            <person name="Aebersold R."/>
            <person name="Watts J.D."/>
        </authorList>
    </citation>
    <scope>GLYCOSYLATION [LARGE SCALE ANALYSIS] AT ASN-48</scope>
</reference>
<reference key="6">
    <citation type="journal article" date="2010" name="Cell">
        <title>A tissue-specific atlas of mouse protein phosphorylation and expression.</title>
        <authorList>
            <person name="Huttlin E.L."/>
            <person name="Jedrychowski M.P."/>
            <person name="Elias J.E."/>
            <person name="Goswami T."/>
            <person name="Rad R."/>
            <person name="Beausoleil S.A."/>
            <person name="Villen J."/>
            <person name="Haas W."/>
            <person name="Sowa M.E."/>
            <person name="Gygi S.P."/>
        </authorList>
    </citation>
    <scope>IDENTIFICATION BY MASS SPECTROMETRY [LARGE SCALE ANALYSIS]</scope>
    <source>
        <tissue>Heart</tissue>
        <tissue>Kidney</tissue>
        <tissue>Liver</tissue>
        <tissue>Lung</tissue>
        <tissue>Spleen</tissue>
        <tissue>Testis</tissue>
    </source>
</reference>
<reference key="7">
    <citation type="journal article" date="2013" name="J. Pharmacol. Exp. Ther.">
        <title>Basolateral uptake of nucleosides by Sertoli cells is mediated primarily by equilibrative nucleoside transporter 1.</title>
        <authorList>
            <person name="Klein D.M."/>
            <person name="Evans K.K."/>
            <person name="Hardwick R.N."/>
            <person name="Dantzler W.H."/>
            <person name="Wright S.H."/>
            <person name="Cherrington N.J."/>
        </authorList>
    </citation>
    <scope>FUNCTION</scope>
    <scope>TRANSPORTER ACTIVITY</scope>
    <scope>ACTIVITY REGULATION</scope>
    <scope>TISSUE SPECIFICITY</scope>
</reference>
<reference key="8">
    <citation type="journal article" date="2022" name="Nature">
        <title>Apoptotic brown adipocytes enhance energy expenditure via extracellular inosine.</title>
        <authorList>
            <person name="Niemann B."/>
            <person name="Haufs-Brusberg S."/>
            <person name="Puetz L."/>
            <person name="Feickert M."/>
            <person name="Jaeckstein M.Y."/>
            <person name="Hoffmann A."/>
            <person name="Zurkovic J."/>
            <person name="Heine M."/>
            <person name="Trautmann E.M."/>
            <person name="Mueller C.E."/>
            <person name="Toenjes A."/>
            <person name="Schlein C."/>
            <person name="Jafari A."/>
            <person name="Eltzschig H.K."/>
            <person name="Gnad T."/>
            <person name="Blueher M."/>
            <person name="Krahmer N."/>
            <person name="Kovacs P."/>
            <person name="Heeren J."/>
            <person name="Pfeifer A."/>
        </authorList>
    </citation>
    <scope>FUNCTION</scope>
    <scope>TRANSPORTER ACTIVITY</scope>
    <scope>TISSUE SPECIFICITY</scope>
    <scope>DISRUPTION PHENOTYPE</scope>
</reference>
<name>S29A1_MOUSE</name>